<name>FLUC_JANSC</name>
<accession>Q28US2</accession>
<comment type="function">
    <text evidence="1">Fluoride-specific ion channel. Important for reducing fluoride concentration in the cell, thus reducing its toxicity.</text>
</comment>
<comment type="catalytic activity">
    <reaction evidence="1">
        <text>fluoride(in) = fluoride(out)</text>
        <dbReference type="Rhea" id="RHEA:76159"/>
        <dbReference type="ChEBI" id="CHEBI:17051"/>
    </reaction>
    <physiologicalReaction direction="left-to-right" evidence="1">
        <dbReference type="Rhea" id="RHEA:76160"/>
    </physiologicalReaction>
</comment>
<comment type="activity regulation">
    <text evidence="1">Na(+) is not transported, but it plays an essential structural role and its presence is essential for fluoride channel function.</text>
</comment>
<comment type="subcellular location">
    <subcellularLocation>
        <location evidence="1">Cell inner membrane</location>
        <topology evidence="1">Multi-pass membrane protein</topology>
    </subcellularLocation>
</comment>
<comment type="similarity">
    <text evidence="1">Belongs to the fluoride channel Fluc/FEX (TC 1.A.43) family.</text>
</comment>
<organism>
    <name type="scientific">Jannaschia sp. (strain CCS1)</name>
    <dbReference type="NCBI Taxonomy" id="290400"/>
    <lineage>
        <taxon>Bacteria</taxon>
        <taxon>Pseudomonadati</taxon>
        <taxon>Pseudomonadota</taxon>
        <taxon>Alphaproteobacteria</taxon>
        <taxon>Rhodobacterales</taxon>
        <taxon>Roseobacteraceae</taxon>
        <taxon>Jannaschia</taxon>
    </lineage>
</organism>
<gene>
    <name evidence="1" type="primary">fluC</name>
    <name evidence="1" type="synonym">crcB</name>
    <name type="ordered locus">Jann_0623</name>
</gene>
<evidence type="ECO:0000255" key="1">
    <source>
        <dbReference type="HAMAP-Rule" id="MF_00454"/>
    </source>
</evidence>
<reference key="1">
    <citation type="submission" date="2006-02" db="EMBL/GenBank/DDBJ databases">
        <title>Complete sequence of chromosome of Jannaschia sp. CCS1.</title>
        <authorList>
            <consortium name="US DOE Joint Genome Institute"/>
            <person name="Copeland A."/>
            <person name="Lucas S."/>
            <person name="Lapidus A."/>
            <person name="Barry K."/>
            <person name="Detter J.C."/>
            <person name="Glavina del Rio T."/>
            <person name="Hammon N."/>
            <person name="Israni S."/>
            <person name="Pitluck S."/>
            <person name="Brettin T."/>
            <person name="Bruce D."/>
            <person name="Han C."/>
            <person name="Tapia R."/>
            <person name="Gilna P."/>
            <person name="Chertkov O."/>
            <person name="Saunders E."/>
            <person name="Schmutz J."/>
            <person name="Larimer F."/>
            <person name="Land M."/>
            <person name="Kyrpides N."/>
            <person name="Lykidis A."/>
            <person name="Moran M.A."/>
            <person name="Belas R."/>
            <person name="Ye W."/>
            <person name="Buchan A."/>
            <person name="Gonzalez J.M."/>
            <person name="Schell M.A."/>
            <person name="Richardson P."/>
        </authorList>
    </citation>
    <scope>NUCLEOTIDE SEQUENCE [LARGE SCALE GENOMIC DNA]</scope>
    <source>
        <strain>CCS1</strain>
    </source>
</reference>
<proteinExistence type="inferred from homology"/>
<feature type="chain" id="PRO_0000252889" description="Fluoride-specific ion channel FluC">
    <location>
        <begin position="1"/>
        <end position="105"/>
    </location>
</feature>
<feature type="transmembrane region" description="Helical" evidence="1">
    <location>
        <begin position="14"/>
        <end position="34"/>
    </location>
</feature>
<feature type="transmembrane region" description="Helical" evidence="1">
    <location>
        <begin position="44"/>
        <end position="64"/>
    </location>
</feature>
<feature type="transmembrane region" description="Helical" evidence="1">
    <location>
        <begin position="79"/>
        <end position="99"/>
    </location>
</feature>
<feature type="binding site" evidence="1">
    <location>
        <position position="54"/>
    </location>
    <ligand>
        <name>Na(+)</name>
        <dbReference type="ChEBI" id="CHEBI:29101"/>
        <note>structural</note>
    </ligand>
</feature>
<feature type="binding site" evidence="1">
    <location>
        <position position="57"/>
    </location>
    <ligand>
        <name>Na(+)</name>
        <dbReference type="ChEBI" id="CHEBI:29101"/>
        <note>structural</note>
    </ligand>
</feature>
<protein>
    <recommendedName>
        <fullName evidence="1">Fluoride-specific ion channel FluC</fullName>
    </recommendedName>
</protein>
<dbReference type="EMBL" id="CP000264">
    <property type="protein sequence ID" value="ABD53540.1"/>
    <property type="molecule type" value="Genomic_DNA"/>
</dbReference>
<dbReference type="SMR" id="Q28US2"/>
<dbReference type="STRING" id="290400.Jann_0623"/>
<dbReference type="KEGG" id="jan:Jann_0623"/>
<dbReference type="eggNOG" id="COG0239">
    <property type="taxonomic scope" value="Bacteria"/>
</dbReference>
<dbReference type="HOGENOM" id="CLU_114342_3_0_5"/>
<dbReference type="Proteomes" id="UP000008326">
    <property type="component" value="Chromosome"/>
</dbReference>
<dbReference type="GO" id="GO:0005886">
    <property type="term" value="C:plasma membrane"/>
    <property type="evidence" value="ECO:0007669"/>
    <property type="project" value="UniProtKB-SubCell"/>
</dbReference>
<dbReference type="GO" id="GO:0062054">
    <property type="term" value="F:fluoride channel activity"/>
    <property type="evidence" value="ECO:0007669"/>
    <property type="project" value="UniProtKB-UniRule"/>
</dbReference>
<dbReference type="GO" id="GO:0046872">
    <property type="term" value="F:metal ion binding"/>
    <property type="evidence" value="ECO:0007669"/>
    <property type="project" value="UniProtKB-KW"/>
</dbReference>
<dbReference type="GO" id="GO:0140114">
    <property type="term" value="P:cellular detoxification of fluoride"/>
    <property type="evidence" value="ECO:0007669"/>
    <property type="project" value="UniProtKB-UniRule"/>
</dbReference>
<dbReference type="HAMAP" id="MF_00454">
    <property type="entry name" value="FluC"/>
    <property type="match status" value="1"/>
</dbReference>
<dbReference type="InterPro" id="IPR003691">
    <property type="entry name" value="FluC"/>
</dbReference>
<dbReference type="NCBIfam" id="NF010805">
    <property type="entry name" value="PRK14209.1"/>
    <property type="match status" value="1"/>
</dbReference>
<dbReference type="PANTHER" id="PTHR28259">
    <property type="entry name" value="FLUORIDE EXPORT PROTEIN 1-RELATED"/>
    <property type="match status" value="1"/>
</dbReference>
<dbReference type="PANTHER" id="PTHR28259:SF1">
    <property type="entry name" value="FLUORIDE EXPORT PROTEIN 1-RELATED"/>
    <property type="match status" value="1"/>
</dbReference>
<dbReference type="Pfam" id="PF02537">
    <property type="entry name" value="CRCB"/>
    <property type="match status" value="1"/>
</dbReference>
<sequence length="105" mass="10825">MLRVFGHGTVGGAFPLPILTVNVLGSFLMGVFVVAAAHRGLTHLSPLVMTGLLGGFTTFSAFSLETVTLYERGDVGQAALYVALSVGLSIAGLMAGLWLARGVFA</sequence>
<keyword id="KW-0997">Cell inner membrane</keyword>
<keyword id="KW-1003">Cell membrane</keyword>
<keyword id="KW-0407">Ion channel</keyword>
<keyword id="KW-0406">Ion transport</keyword>
<keyword id="KW-0472">Membrane</keyword>
<keyword id="KW-0479">Metal-binding</keyword>
<keyword id="KW-1185">Reference proteome</keyword>
<keyword id="KW-0915">Sodium</keyword>
<keyword id="KW-0812">Transmembrane</keyword>
<keyword id="KW-1133">Transmembrane helix</keyword>
<keyword id="KW-0813">Transport</keyword>